<evidence type="ECO:0000255" key="1"/>
<evidence type="ECO:0000269" key="2">
    <source>
    </source>
</evidence>
<evidence type="ECO:0000269" key="3">
    <source>
    </source>
</evidence>
<evidence type="ECO:0000269" key="4">
    <source>
    </source>
</evidence>
<evidence type="ECO:0000269" key="5">
    <source>
    </source>
</evidence>
<evidence type="ECO:0000269" key="6">
    <source>
    </source>
</evidence>
<evidence type="ECO:0000269" key="7">
    <source>
    </source>
</evidence>
<evidence type="ECO:0007829" key="8">
    <source>
        <dbReference type="PDB" id="2CH8"/>
    </source>
</evidence>
<evidence type="ECO:0007829" key="9">
    <source>
        <dbReference type="PDB" id="3UEZ"/>
    </source>
</evidence>
<accession>P03228</accession>
<accession>Q777A5</accession>
<proteinExistence type="evidence at protein level"/>
<protein>
    <recommendedName>
        <fullName>Secreted protein BARF1</fullName>
    </recommendedName>
    <alternativeName>
        <fullName>33 kDa early protein</fullName>
    </alternativeName>
    <alternativeName>
        <fullName>p33</fullName>
    </alternativeName>
</protein>
<keyword id="KW-0002">3D-structure</keyword>
<keyword id="KW-1015">Disulfide bond</keyword>
<keyword id="KW-0244">Early protein</keyword>
<keyword id="KW-0325">Glycoprotein</keyword>
<keyword id="KW-0393">Immunoglobulin domain</keyword>
<keyword id="KW-0553">Oncogene</keyword>
<keyword id="KW-1185">Reference proteome</keyword>
<keyword id="KW-0677">Repeat</keyword>
<keyword id="KW-0964">Secreted</keyword>
<keyword id="KW-0732">Signal</keyword>
<feature type="signal peptide" evidence="1">
    <location>
        <begin position="1"/>
        <end position="20"/>
    </location>
</feature>
<feature type="chain" id="PRO_0000408391" description="Secreted protein BARF1">
    <location>
        <begin position="21"/>
        <end position="221"/>
    </location>
</feature>
<feature type="domain" description="Ig-like 1">
    <location>
        <begin position="21"/>
        <end position="120"/>
    </location>
</feature>
<feature type="domain" description="Ig-like 2">
    <location>
        <begin position="124"/>
        <end position="220"/>
    </location>
</feature>
<feature type="glycosylation site" description="N-linked (GlcNAc...) asparagine; by host" evidence="5">
    <location>
        <position position="95"/>
    </location>
</feature>
<feature type="disulfide bond" evidence="5">
    <location>
        <begin position="146"/>
        <end position="201"/>
    </location>
</feature>
<feature type="strand" evidence="8">
    <location>
        <begin position="22"/>
        <end position="24"/>
    </location>
</feature>
<feature type="strand" evidence="8">
    <location>
        <begin position="29"/>
        <end position="34"/>
    </location>
</feature>
<feature type="helix" evidence="8">
    <location>
        <begin position="41"/>
        <end position="43"/>
    </location>
</feature>
<feature type="strand" evidence="8">
    <location>
        <begin position="44"/>
        <end position="51"/>
    </location>
</feature>
<feature type="helix" evidence="9">
    <location>
        <begin position="53"/>
        <end position="55"/>
    </location>
</feature>
<feature type="strand" evidence="8">
    <location>
        <begin position="57"/>
        <end position="64"/>
    </location>
</feature>
<feature type="strand" evidence="8">
    <location>
        <begin position="67"/>
        <end position="70"/>
    </location>
</feature>
<feature type="helix" evidence="8">
    <location>
        <begin position="72"/>
        <end position="74"/>
    </location>
</feature>
<feature type="strand" evidence="8">
    <location>
        <begin position="78"/>
        <end position="83"/>
    </location>
</feature>
<feature type="strand" evidence="8">
    <location>
        <begin position="86"/>
        <end position="93"/>
    </location>
</feature>
<feature type="helix" evidence="8">
    <location>
        <begin position="96"/>
        <end position="98"/>
    </location>
</feature>
<feature type="strand" evidence="8">
    <location>
        <begin position="100"/>
        <end position="108"/>
    </location>
</feature>
<feature type="strand" evidence="8">
    <location>
        <begin position="111"/>
        <end position="133"/>
    </location>
</feature>
<feature type="strand" evidence="8">
    <location>
        <begin position="142"/>
        <end position="152"/>
    </location>
</feature>
<feature type="strand" evidence="8">
    <location>
        <begin position="154"/>
        <end position="159"/>
    </location>
</feature>
<feature type="strand" evidence="9">
    <location>
        <begin position="179"/>
        <end position="181"/>
    </location>
</feature>
<feature type="strand" evidence="8">
    <location>
        <begin position="183"/>
        <end position="191"/>
    </location>
</feature>
<feature type="strand" evidence="8">
    <location>
        <begin position="198"/>
        <end position="205"/>
    </location>
</feature>
<feature type="strand" evidence="8">
    <location>
        <begin position="208"/>
        <end position="216"/>
    </location>
</feature>
<gene>
    <name type="ORF">BARF1</name>
</gene>
<comment type="function">
    <text evidence="2 3 4">Plays diverse functions in immunomodulation and oncogenicity, maybe by acting as a functional receptor for human CSF1. May inhibit interferon secretion from mononuclear cells. Exhibits oncogenic activity in vitro.</text>
</comment>
<comment type="subunit">
    <text evidence="7">Homohexamer. Interacts with human CSF1.</text>
</comment>
<comment type="interaction">
    <interactant intactId="EBI-16007073">
        <id>P03228</id>
    </interactant>
    <interactant intactId="EBI-16007073">
        <id>P03228</id>
        <label>BARF1</label>
    </interactant>
    <organismsDiffer>false</organismsDiffer>
    <experiments>3</experiments>
</comment>
<comment type="interaction">
    <interactant intactId="EBI-16007073">
        <id>P03228</id>
    </interactant>
    <interactant intactId="EBI-777188">
        <id>P07141</id>
        <label>Csf1</label>
    </interactant>
    <organismsDiffer>true</organismsDiffer>
    <experiments>8</experiments>
</comment>
<comment type="interaction">
    <interactant intactId="EBI-16007073">
        <id>P03228</id>
    </interactant>
    <interactant intactId="EBI-2872294">
        <id>P09603</id>
        <label>CSF1</label>
    </interactant>
    <organismsDiffer>true</organismsDiffer>
    <experiments>9</experiments>
</comment>
<comment type="subcellular location">
    <subcellularLocation>
        <location evidence="6">Secreted</location>
    </subcellularLocation>
    <text>Massively secreted in the serum of EBV-induced nasophyryngeal carcinoma patients.</text>
</comment>
<comment type="PTM">
    <text>Phosphorylated on serine and threonine by host.</text>
</comment>
<sequence length="221" mass="24471">MARFIAQLLLLASCVAAGQAVTAFLGERVTLTSYWRRVSLGPEIEVSWFKLGPGEEQVLIGRMHHDVIFIEWPFRGFFDIHRSANTFFLVVTAANISHDGNYLCRMKLGETEVTKQEHLSVVKPLTLSVHSERSQFPDFSVLTVTCTVNAFPHPHVQWLMPEGVEPAPTAANGGVMKEKDGSLSVAVDLSLPKPWHLPVTCVGKNDKEEAHGVYVSGYLSQ</sequence>
<organism>
    <name type="scientific">Epstein-Barr virus (strain B95-8)</name>
    <name type="common">HHV-4</name>
    <name type="synonym">Human herpesvirus 4</name>
    <dbReference type="NCBI Taxonomy" id="10377"/>
    <lineage>
        <taxon>Viruses</taxon>
        <taxon>Duplodnaviria</taxon>
        <taxon>Heunggongvirae</taxon>
        <taxon>Peploviricota</taxon>
        <taxon>Herviviricetes</taxon>
        <taxon>Herpesvirales</taxon>
        <taxon>Orthoherpesviridae</taxon>
        <taxon>Gammaherpesvirinae</taxon>
        <taxon>Lymphocryptovirus</taxon>
        <taxon>Lymphocryptovirus humangamma4</taxon>
        <taxon>Epstein-Barr virus (strain GD1)</taxon>
    </lineage>
</organism>
<dbReference type="EMBL" id="V01555">
    <property type="protein sequence ID" value="CAA24809.1"/>
    <property type="molecule type" value="Genomic_DNA"/>
</dbReference>
<dbReference type="EMBL" id="AJ507799">
    <property type="protein sequence ID" value="CAD53469.1"/>
    <property type="molecule type" value="Genomic_DNA"/>
</dbReference>
<dbReference type="PIR" id="B43045">
    <property type="entry name" value="QQBE48"/>
</dbReference>
<dbReference type="RefSeq" id="YP_401719.1">
    <property type="nucleotide sequence ID" value="NC_007605.1"/>
</dbReference>
<dbReference type="PDB" id="2CH8">
    <property type="method" value="X-ray"/>
    <property type="resolution" value="2.30 A"/>
    <property type="chains" value="A/B/C/D=21-221"/>
</dbReference>
<dbReference type="PDB" id="3UEZ">
    <property type="method" value="X-ray"/>
    <property type="resolution" value="3.41 A"/>
    <property type="chains" value="A/B/C/D=21-221"/>
</dbReference>
<dbReference type="PDB" id="4ADF">
    <property type="method" value="X-ray"/>
    <property type="resolution" value="4.40 A"/>
    <property type="chains" value="A/B/C/D/E/F/M/N/O/P/Q/R=21-221"/>
</dbReference>
<dbReference type="PDB" id="4ADQ">
    <property type="method" value="X-ray"/>
    <property type="resolution" value="4.50 A"/>
    <property type="chains" value="A/B/C/D=21-221"/>
</dbReference>
<dbReference type="PDBsum" id="2CH8"/>
<dbReference type="PDBsum" id="3UEZ"/>
<dbReference type="PDBsum" id="4ADF"/>
<dbReference type="PDBsum" id="4ADQ"/>
<dbReference type="SMR" id="P03228"/>
<dbReference type="DIP" id="DIP-47684N"/>
<dbReference type="IntAct" id="P03228">
    <property type="interactions" value="3"/>
</dbReference>
<dbReference type="iPTMnet" id="P03228"/>
<dbReference type="DNASU" id="3783772"/>
<dbReference type="GeneID" id="3783772"/>
<dbReference type="KEGG" id="vg:3783772"/>
<dbReference type="EvolutionaryTrace" id="P03228"/>
<dbReference type="Proteomes" id="UP000153037">
    <property type="component" value="Segment"/>
</dbReference>
<dbReference type="GO" id="GO:0005576">
    <property type="term" value="C:extracellular region"/>
    <property type="evidence" value="ECO:0007669"/>
    <property type="project" value="UniProtKB-SubCell"/>
</dbReference>
<dbReference type="GO" id="GO:0042802">
    <property type="term" value="F:identical protein binding"/>
    <property type="evidence" value="ECO:0000353"/>
    <property type="project" value="IntAct"/>
</dbReference>
<dbReference type="Gene3D" id="2.60.40.10">
    <property type="entry name" value="Immunoglobulins"/>
    <property type="match status" value="2"/>
</dbReference>
<dbReference type="InterPro" id="IPR054777">
    <property type="entry name" value="BARF1_Ig_2"/>
</dbReference>
<dbReference type="InterPro" id="IPR007110">
    <property type="entry name" value="Ig-like_dom"/>
</dbReference>
<dbReference type="InterPro" id="IPR036179">
    <property type="entry name" value="Ig-like_dom_sf"/>
</dbReference>
<dbReference type="InterPro" id="IPR013783">
    <property type="entry name" value="Ig-like_fold"/>
</dbReference>
<dbReference type="Pfam" id="PF22305">
    <property type="entry name" value="BARF1_ig2"/>
    <property type="match status" value="1"/>
</dbReference>
<dbReference type="SUPFAM" id="SSF48726">
    <property type="entry name" value="Immunoglobulin"/>
    <property type="match status" value="2"/>
</dbReference>
<dbReference type="PROSITE" id="PS50835">
    <property type="entry name" value="IG_LIKE"/>
    <property type="match status" value="1"/>
</dbReference>
<organismHost>
    <name type="scientific">Homo sapiens</name>
    <name type="common">Human</name>
    <dbReference type="NCBI Taxonomy" id="9606"/>
</organismHost>
<name>BARF1_EBVB9</name>
<reference key="1">
    <citation type="journal article" date="1984" name="Nature">
        <title>DNA sequence and expression of the B95-8 Epstein-Barr virus genome.</title>
        <authorList>
            <person name="Baer R."/>
            <person name="Bankier A.T."/>
            <person name="Biggin M.D."/>
            <person name="Deininger P.L."/>
            <person name="Farrell P.J."/>
            <person name="Gibson T.J."/>
            <person name="Hatfull G."/>
            <person name="Hudson G.S."/>
            <person name="Satchwell S.C."/>
            <person name="Seguin C."/>
            <person name="Tuffnell P.S."/>
            <person name="Barrell B.G."/>
        </authorList>
    </citation>
    <scope>NUCLEOTIDE SEQUENCE [LARGE SCALE GENOMIC DNA]</scope>
</reference>
<reference key="2">
    <citation type="journal article" date="2003" name="Virology">
        <title>Updated Epstein-Barr virus (EBV) DNA sequence and analysis of a promoter for the BART (CST, BARF0) RNAs of EBV.</title>
        <authorList>
            <person name="de Jesus O."/>
            <person name="Smith P.R."/>
            <person name="Spender L.C."/>
            <person name="Elgueta Karstegl C."/>
            <person name="Niller H.H."/>
            <person name="Huang D."/>
            <person name="Farrell P.J."/>
        </authorList>
    </citation>
    <scope>GENOME REANNOTATION</scope>
</reference>
<reference key="3">
    <citation type="journal article" date="1989" name="EMBO J.">
        <title>A transforming function of the BARF1 gene encoded by Epstein-Barr virus.</title>
        <authorList>
            <person name="Wei M.X."/>
            <person name="Ooka T."/>
        </authorList>
    </citation>
    <scope>IDENTIFICATION OF PROTEIN</scope>
</reference>
<reference key="4">
    <citation type="journal article" date="1998" name="J. Virol.">
        <title>The Epstein-Barr virus BARF1 gene encodes a novel, soluble colony-stimulating factor-1 receptor.</title>
        <authorList>
            <person name="Strockbine L.D."/>
            <person name="Cohen J.I."/>
            <person name="Farrah T."/>
            <person name="Lyman S.D."/>
            <person name="Wagener F."/>
            <person name="DuBose R.F."/>
            <person name="Armitage R.J."/>
            <person name="Spriggs M.K."/>
        </authorList>
    </citation>
    <scope>INTERACTION WITH HUMAN CSF1</scope>
</reference>
<reference key="5">
    <citation type="journal article" date="2004" name="Oncogene">
        <title>Mitogenic activity of Epstein-Barr virus-encoded BARF1 protein.</title>
        <authorList>
            <person name="Sall A."/>
            <person name="Caserta S."/>
            <person name="Jolicoeur P."/>
            <person name="Franqueville L."/>
            <person name="de Turenne-Tessier M."/>
            <person name="Ooka T."/>
        </authorList>
    </citation>
    <scope>FUNCTION</scope>
</reference>
<reference key="6">
    <citation type="journal article" date="2005" name="J. Med. Virol.">
        <title>Epstein-Barr virus (EBV)-encoded BARF1 gene is expressed in nasopharyngeal carcinoma and EBV-associated gastric carcinoma tissues in the absence of lytic gene expression.</title>
        <authorList>
            <person name="Seto E."/>
            <person name="Yang L."/>
            <person name="Middeldorp J."/>
            <person name="Sheen T.S."/>
            <person name="Chen J.Y."/>
            <person name="Fukayama M."/>
            <person name="Eizuru Y."/>
            <person name="Ooka T."/>
            <person name="Takada K."/>
        </authorList>
    </citation>
    <scope>FUNCTION</scope>
</reference>
<reference key="7">
    <citation type="journal article" date="2006" name="Cancer Lett.">
        <title>Anti-apoptotic role of BARF1 in gastric cancer cells.</title>
        <authorList>
            <person name="Wang Q."/>
            <person name="Tsao S.W."/>
            <person name="Ooka T."/>
            <person name="Nicholls J.M."/>
            <person name="Cheung H.W."/>
            <person name="Fu S."/>
            <person name="Wong Y.C."/>
            <person name="Wang X."/>
        </authorList>
    </citation>
    <scope>FUNCTION</scope>
</reference>
<reference key="8">
    <citation type="journal article" date="2006" name="Oncogene">
        <title>Biochemical and functional characterization of Epstein-Barr virus-encoded BARF1 protein: interaction with human hTid1 protein facilitates its maturation and secretion.</title>
        <authorList>
            <person name="Wang L."/>
            <person name="Tam J.P."/>
            <person name="Liu D.X."/>
        </authorList>
    </citation>
    <scope>IDENTIFICATION</scope>
</reference>
<reference key="9">
    <citation type="journal article" date="2007" name="J. Gen. Virol.">
        <title>Post-translational modifications of Epstein Barr virus BARF1 oncogene-encoded polypeptide.</title>
        <authorList>
            <person name="de Turenne-Tessier M."/>
            <person name="Ooka T."/>
        </authorList>
    </citation>
    <scope>POST-TRANSLATIONAL MODIFICATIONS</scope>
</reference>
<reference key="10">
    <citation type="journal article" date="2008" name="Virol. J.">
        <title>Secretion of Epstein-Barr virus-encoded BARF1 oncoprotein from latently infected B cells.</title>
        <authorList>
            <person name="Fiorini S."/>
            <person name="Ooka T."/>
        </authorList>
    </citation>
    <scope>SUBCELLULAR LOCATION</scope>
</reference>
<reference key="11">
    <citation type="journal article" date="2006" name="J. Mol. Biol.">
        <title>Structure of the Epstein-Barr virus oncogene BARF1.</title>
        <authorList>
            <person name="Tarbouriech N."/>
            <person name="Ruggiero F."/>
            <person name="de Turenne-Tessier M."/>
            <person name="Ooka T."/>
            <person name="Burmeister W.P."/>
        </authorList>
    </citation>
    <scope>X-RAY CRYSTALLOGRAPHY (2.30 ANGSTROMS) OF 21-221</scope>
    <scope>DISULFIDE BONDS</scope>
    <scope>GLYCOSYLATION AT ASN-95</scope>
</reference>